<organism>
    <name type="scientific">Acinetobacter baumannii (strain AYE)</name>
    <dbReference type="NCBI Taxonomy" id="509173"/>
    <lineage>
        <taxon>Bacteria</taxon>
        <taxon>Pseudomonadati</taxon>
        <taxon>Pseudomonadota</taxon>
        <taxon>Gammaproteobacteria</taxon>
        <taxon>Moraxellales</taxon>
        <taxon>Moraxellaceae</taxon>
        <taxon>Acinetobacter</taxon>
        <taxon>Acinetobacter calcoaceticus/baumannii complex</taxon>
    </lineage>
</organism>
<name>COAD_ACIBY</name>
<accession>B0V8I3</accession>
<reference key="1">
    <citation type="journal article" date="2008" name="PLoS ONE">
        <title>Comparative analysis of Acinetobacters: three genomes for three lifestyles.</title>
        <authorList>
            <person name="Vallenet D."/>
            <person name="Nordmann P."/>
            <person name="Barbe V."/>
            <person name="Poirel L."/>
            <person name="Mangenot S."/>
            <person name="Bataille E."/>
            <person name="Dossat C."/>
            <person name="Gas S."/>
            <person name="Kreimeyer A."/>
            <person name="Lenoble P."/>
            <person name="Oztas S."/>
            <person name="Poulain J."/>
            <person name="Segurens B."/>
            <person name="Robert C."/>
            <person name="Abergel C."/>
            <person name="Claverie J.-M."/>
            <person name="Raoult D."/>
            <person name="Medigue C."/>
            <person name="Weissenbach J."/>
            <person name="Cruveiller S."/>
        </authorList>
    </citation>
    <scope>NUCLEOTIDE SEQUENCE [LARGE SCALE GENOMIC DNA]</scope>
    <source>
        <strain>AYE</strain>
    </source>
</reference>
<feature type="chain" id="PRO_1000096753" description="Phosphopantetheine adenylyltransferase">
    <location>
        <begin position="1"/>
        <end position="163"/>
    </location>
</feature>
<feature type="binding site" evidence="1">
    <location>
        <begin position="11"/>
        <end position="12"/>
    </location>
    <ligand>
        <name>ATP</name>
        <dbReference type="ChEBI" id="CHEBI:30616"/>
    </ligand>
</feature>
<feature type="binding site" evidence="1">
    <location>
        <position position="11"/>
    </location>
    <ligand>
        <name>substrate</name>
    </ligand>
</feature>
<feature type="binding site" evidence="1">
    <location>
        <position position="19"/>
    </location>
    <ligand>
        <name>ATP</name>
        <dbReference type="ChEBI" id="CHEBI:30616"/>
    </ligand>
</feature>
<feature type="binding site" evidence="1">
    <location>
        <position position="43"/>
    </location>
    <ligand>
        <name>substrate</name>
    </ligand>
</feature>
<feature type="binding site" evidence="1">
    <location>
        <position position="75"/>
    </location>
    <ligand>
        <name>substrate</name>
    </ligand>
</feature>
<feature type="binding site" evidence="1">
    <location>
        <position position="89"/>
    </location>
    <ligand>
        <name>substrate</name>
    </ligand>
</feature>
<feature type="binding site" evidence="1">
    <location>
        <begin position="90"/>
        <end position="92"/>
    </location>
    <ligand>
        <name>ATP</name>
        <dbReference type="ChEBI" id="CHEBI:30616"/>
    </ligand>
</feature>
<feature type="binding site" evidence="1">
    <location>
        <position position="100"/>
    </location>
    <ligand>
        <name>ATP</name>
        <dbReference type="ChEBI" id="CHEBI:30616"/>
    </ligand>
</feature>
<feature type="binding site" evidence="1">
    <location>
        <begin position="125"/>
        <end position="131"/>
    </location>
    <ligand>
        <name>ATP</name>
        <dbReference type="ChEBI" id="CHEBI:30616"/>
    </ligand>
</feature>
<feature type="site" description="Transition state stabilizer" evidence="1">
    <location>
        <position position="19"/>
    </location>
</feature>
<feature type="strand" evidence="2">
    <location>
        <begin position="5"/>
        <end position="10"/>
    </location>
</feature>
<feature type="helix" evidence="2">
    <location>
        <begin position="17"/>
        <end position="29"/>
    </location>
</feature>
<feature type="strand" evidence="2">
    <location>
        <begin position="31"/>
        <end position="38"/>
    </location>
</feature>
<feature type="turn" evidence="2">
    <location>
        <begin position="41"/>
        <end position="43"/>
    </location>
</feature>
<feature type="helix" evidence="2">
    <location>
        <begin position="49"/>
        <end position="60"/>
    </location>
</feature>
<feature type="strand" evidence="2">
    <location>
        <begin position="66"/>
        <end position="71"/>
    </location>
</feature>
<feature type="helix" evidence="2">
    <location>
        <begin position="75"/>
        <end position="81"/>
    </location>
</feature>
<feature type="strand" evidence="2">
    <location>
        <begin position="85"/>
        <end position="90"/>
    </location>
</feature>
<feature type="helix" evidence="2">
    <location>
        <begin position="94"/>
        <end position="110"/>
    </location>
</feature>
<feature type="strand" evidence="2">
    <location>
        <begin position="116"/>
        <end position="119"/>
    </location>
</feature>
<feature type="strand" evidence="2">
    <location>
        <begin position="125"/>
        <end position="127"/>
    </location>
</feature>
<feature type="helix" evidence="2">
    <location>
        <begin position="130"/>
        <end position="138"/>
    </location>
</feature>
<feature type="turn" evidence="2">
    <location>
        <begin position="144"/>
        <end position="146"/>
    </location>
</feature>
<feature type="helix" evidence="2">
    <location>
        <begin position="149"/>
        <end position="160"/>
    </location>
</feature>
<protein>
    <recommendedName>
        <fullName evidence="1">Phosphopantetheine adenylyltransferase</fullName>
        <ecNumber evidence="1">2.7.7.3</ecNumber>
    </recommendedName>
    <alternativeName>
        <fullName evidence="1">Dephospho-CoA pyrophosphorylase</fullName>
    </alternativeName>
    <alternativeName>
        <fullName evidence="1">Pantetheine-phosphate adenylyltransferase</fullName>
        <shortName evidence="1">PPAT</shortName>
    </alternativeName>
</protein>
<comment type="function">
    <text evidence="1">Reversibly transfers an adenylyl group from ATP to 4'-phosphopantetheine, yielding dephospho-CoA (dPCoA) and pyrophosphate.</text>
</comment>
<comment type="catalytic activity">
    <reaction evidence="1">
        <text>(R)-4'-phosphopantetheine + ATP + H(+) = 3'-dephospho-CoA + diphosphate</text>
        <dbReference type="Rhea" id="RHEA:19801"/>
        <dbReference type="ChEBI" id="CHEBI:15378"/>
        <dbReference type="ChEBI" id="CHEBI:30616"/>
        <dbReference type="ChEBI" id="CHEBI:33019"/>
        <dbReference type="ChEBI" id="CHEBI:57328"/>
        <dbReference type="ChEBI" id="CHEBI:61723"/>
        <dbReference type="EC" id="2.7.7.3"/>
    </reaction>
</comment>
<comment type="cofactor">
    <cofactor evidence="1">
        <name>Mg(2+)</name>
        <dbReference type="ChEBI" id="CHEBI:18420"/>
    </cofactor>
</comment>
<comment type="pathway">
    <text evidence="1">Cofactor biosynthesis; coenzyme A biosynthesis; CoA from (R)-pantothenate: step 4/5.</text>
</comment>
<comment type="subunit">
    <text evidence="1">Homohexamer.</text>
</comment>
<comment type="subcellular location">
    <subcellularLocation>
        <location evidence="1">Cytoplasm</location>
    </subcellularLocation>
</comment>
<comment type="similarity">
    <text evidence="1">Belongs to the bacterial CoaD family.</text>
</comment>
<sequence length="163" mass="18456">MSKTRVIYPGTFDPITNGHVDLVTRASRMFDEVVVAIAIGHHKNPLFSLEERVALAQSSLGHLSNVEFVGFDGLLVNFFKEQKATAVLRGLRAVSDFEYEFQLANMNRQLDPHFEAVFLTPSEQYSFISSTLIREIARLKGDVTKFVPQAVVEAFERKHQQGW</sequence>
<keyword id="KW-0002">3D-structure</keyword>
<keyword id="KW-0067">ATP-binding</keyword>
<keyword id="KW-0173">Coenzyme A biosynthesis</keyword>
<keyword id="KW-0963">Cytoplasm</keyword>
<keyword id="KW-0460">Magnesium</keyword>
<keyword id="KW-0547">Nucleotide-binding</keyword>
<keyword id="KW-0548">Nucleotidyltransferase</keyword>
<keyword id="KW-0808">Transferase</keyword>
<gene>
    <name evidence="1" type="primary">coaD</name>
    <name type="ordered locus">ABAYE2969</name>
</gene>
<evidence type="ECO:0000255" key="1">
    <source>
        <dbReference type="HAMAP-Rule" id="MF_00151"/>
    </source>
</evidence>
<evidence type="ECO:0007829" key="2">
    <source>
        <dbReference type="PDB" id="6KKW"/>
    </source>
</evidence>
<dbReference type="EC" id="2.7.7.3" evidence="1"/>
<dbReference type="EMBL" id="CU459141">
    <property type="protein sequence ID" value="CAM87790.1"/>
    <property type="molecule type" value="Genomic_DNA"/>
</dbReference>
<dbReference type="RefSeq" id="WP_000047853.1">
    <property type="nucleotide sequence ID" value="NZ_JBDGFB010000027.1"/>
</dbReference>
<dbReference type="PDB" id="6KKW">
    <property type="method" value="X-ray"/>
    <property type="resolution" value="3.20 A"/>
    <property type="chains" value="A=1-163"/>
</dbReference>
<dbReference type="PDBsum" id="6KKW"/>
<dbReference type="SMR" id="B0V8I3"/>
<dbReference type="EnsemblBacteria" id="CAM87790">
    <property type="protein sequence ID" value="CAM87790"/>
    <property type="gene ID" value="ABAYE2969"/>
</dbReference>
<dbReference type="GeneID" id="92892775"/>
<dbReference type="KEGG" id="aby:ABAYE2969"/>
<dbReference type="HOGENOM" id="CLU_100149_0_1_6"/>
<dbReference type="UniPathway" id="UPA00241">
    <property type="reaction ID" value="UER00355"/>
</dbReference>
<dbReference type="GO" id="GO:0005737">
    <property type="term" value="C:cytoplasm"/>
    <property type="evidence" value="ECO:0007669"/>
    <property type="project" value="UniProtKB-SubCell"/>
</dbReference>
<dbReference type="GO" id="GO:0005524">
    <property type="term" value="F:ATP binding"/>
    <property type="evidence" value="ECO:0007669"/>
    <property type="project" value="UniProtKB-KW"/>
</dbReference>
<dbReference type="GO" id="GO:0004595">
    <property type="term" value="F:pantetheine-phosphate adenylyltransferase activity"/>
    <property type="evidence" value="ECO:0007669"/>
    <property type="project" value="UniProtKB-UniRule"/>
</dbReference>
<dbReference type="GO" id="GO:0015937">
    <property type="term" value="P:coenzyme A biosynthetic process"/>
    <property type="evidence" value="ECO:0007669"/>
    <property type="project" value="UniProtKB-UniRule"/>
</dbReference>
<dbReference type="CDD" id="cd02163">
    <property type="entry name" value="PPAT"/>
    <property type="match status" value="1"/>
</dbReference>
<dbReference type="Gene3D" id="3.40.50.620">
    <property type="entry name" value="HUPs"/>
    <property type="match status" value="1"/>
</dbReference>
<dbReference type="HAMAP" id="MF_00151">
    <property type="entry name" value="PPAT_bact"/>
    <property type="match status" value="1"/>
</dbReference>
<dbReference type="InterPro" id="IPR004821">
    <property type="entry name" value="Cyt_trans-like"/>
</dbReference>
<dbReference type="InterPro" id="IPR001980">
    <property type="entry name" value="PPAT"/>
</dbReference>
<dbReference type="InterPro" id="IPR014729">
    <property type="entry name" value="Rossmann-like_a/b/a_fold"/>
</dbReference>
<dbReference type="NCBIfam" id="TIGR01510">
    <property type="entry name" value="coaD_prev_kdtB"/>
    <property type="match status" value="1"/>
</dbReference>
<dbReference type="NCBIfam" id="TIGR00125">
    <property type="entry name" value="cyt_tran_rel"/>
    <property type="match status" value="1"/>
</dbReference>
<dbReference type="PANTHER" id="PTHR21342">
    <property type="entry name" value="PHOSPHOPANTETHEINE ADENYLYLTRANSFERASE"/>
    <property type="match status" value="1"/>
</dbReference>
<dbReference type="PANTHER" id="PTHR21342:SF1">
    <property type="entry name" value="PHOSPHOPANTETHEINE ADENYLYLTRANSFERASE"/>
    <property type="match status" value="1"/>
</dbReference>
<dbReference type="Pfam" id="PF01467">
    <property type="entry name" value="CTP_transf_like"/>
    <property type="match status" value="1"/>
</dbReference>
<dbReference type="PRINTS" id="PR01020">
    <property type="entry name" value="LPSBIOSNTHSS"/>
</dbReference>
<dbReference type="SUPFAM" id="SSF52374">
    <property type="entry name" value="Nucleotidylyl transferase"/>
    <property type="match status" value="1"/>
</dbReference>
<proteinExistence type="evidence at protein level"/>